<proteinExistence type="evidence at protein level"/>
<name>PEPA4_HUMAN</name>
<sequence length="388" mass="41977">MKWLLLLGLVALSECIMYKVPLIRKKSLRRTLSERGLLKDFLKKHNLNPARKYFPQWEAPTLVDEQPLENYLDMEYFGTIGIGTPAQDFTVVFDTGSSNLWVPSVYCSSLACTNHNRFNPEDSSTYQSTSETVSITYGTGSMTGILGYDTVQVGGISDTNQIFGLSETEPGSFLYYAPFDGILGLAYPSISSSGATPVFDNIWNQGLVSQDLFSVYLSADDQSGSVVIFGGIDSSYYTGSLNWVPVTVEGYWQITVDSITMNGEAIACAEGCQAIVDTGTSLLTGPTSPIANIQSDIGASENSDGDMVVSCSAISSLPDIVFTINGVQYPVPPSAYILQSEGSCISGFQGMNLPTESGELWILGDVFIRQYFTVFDRANNQVGLAPVA</sequence>
<keyword id="KW-0002">3D-structure</keyword>
<keyword id="KW-0064">Aspartyl protease</keyword>
<keyword id="KW-0222">Digestion</keyword>
<keyword id="KW-0903">Direct protein sequencing</keyword>
<keyword id="KW-1015">Disulfide bond</keyword>
<keyword id="KW-0378">Hydrolase</keyword>
<keyword id="KW-0597">Phosphoprotein</keyword>
<keyword id="KW-0645">Protease</keyword>
<keyword id="KW-1185">Reference proteome</keyword>
<keyword id="KW-0964">Secreted</keyword>
<keyword id="KW-0732">Signal</keyword>
<keyword id="KW-0865">Zymogen</keyword>
<reference key="1">
    <citation type="journal article" date="1983" name="J. Biol. Chem.">
        <title>Primary structure of human pepsinogen gene.</title>
        <authorList>
            <person name="Sogawa K."/>
            <person name="Fujii-Kuriyama Y."/>
            <person name="Mizukami Y."/>
            <person name="Ichihara Y."/>
            <person name="Takahashi K."/>
        </authorList>
    </citation>
    <scope>NUCLEOTIDE SEQUENCE [GENOMIC DNA]</scope>
</reference>
<reference key="2">
    <citation type="journal article" date="2004" name="Nat. Genet.">
        <title>Complete sequencing and characterization of 21,243 full-length human cDNAs.</title>
        <authorList>
            <person name="Ota T."/>
            <person name="Suzuki Y."/>
            <person name="Nishikawa T."/>
            <person name="Otsuki T."/>
            <person name="Sugiyama T."/>
            <person name="Irie R."/>
            <person name="Wakamatsu A."/>
            <person name="Hayashi K."/>
            <person name="Sato H."/>
            <person name="Nagai K."/>
            <person name="Kimura K."/>
            <person name="Makita H."/>
            <person name="Sekine M."/>
            <person name="Obayashi M."/>
            <person name="Nishi T."/>
            <person name="Shibahara T."/>
            <person name="Tanaka T."/>
            <person name="Ishii S."/>
            <person name="Yamamoto J."/>
            <person name="Saito K."/>
            <person name="Kawai Y."/>
            <person name="Isono Y."/>
            <person name="Nakamura Y."/>
            <person name="Nagahari K."/>
            <person name="Murakami K."/>
            <person name="Yasuda T."/>
            <person name="Iwayanagi T."/>
            <person name="Wagatsuma M."/>
            <person name="Shiratori A."/>
            <person name="Sudo H."/>
            <person name="Hosoiri T."/>
            <person name="Kaku Y."/>
            <person name="Kodaira H."/>
            <person name="Kondo H."/>
            <person name="Sugawara M."/>
            <person name="Takahashi M."/>
            <person name="Kanda K."/>
            <person name="Yokoi T."/>
            <person name="Furuya T."/>
            <person name="Kikkawa E."/>
            <person name="Omura Y."/>
            <person name="Abe K."/>
            <person name="Kamihara K."/>
            <person name="Katsuta N."/>
            <person name="Sato K."/>
            <person name="Tanikawa M."/>
            <person name="Yamazaki M."/>
            <person name="Ninomiya K."/>
            <person name="Ishibashi T."/>
            <person name="Yamashita H."/>
            <person name="Murakawa K."/>
            <person name="Fujimori K."/>
            <person name="Tanai H."/>
            <person name="Kimata M."/>
            <person name="Watanabe M."/>
            <person name="Hiraoka S."/>
            <person name="Chiba Y."/>
            <person name="Ishida S."/>
            <person name="Ono Y."/>
            <person name="Takiguchi S."/>
            <person name="Watanabe S."/>
            <person name="Yosida M."/>
            <person name="Hotuta T."/>
            <person name="Kusano J."/>
            <person name="Kanehori K."/>
            <person name="Takahashi-Fujii A."/>
            <person name="Hara H."/>
            <person name="Tanase T.-O."/>
            <person name="Nomura Y."/>
            <person name="Togiya S."/>
            <person name="Komai F."/>
            <person name="Hara R."/>
            <person name="Takeuchi K."/>
            <person name="Arita M."/>
            <person name="Imose N."/>
            <person name="Musashino K."/>
            <person name="Yuuki H."/>
            <person name="Oshima A."/>
            <person name="Sasaki N."/>
            <person name="Aotsuka S."/>
            <person name="Yoshikawa Y."/>
            <person name="Matsunawa H."/>
            <person name="Ichihara T."/>
            <person name="Shiohata N."/>
            <person name="Sano S."/>
            <person name="Moriya S."/>
            <person name="Momiyama H."/>
            <person name="Satoh N."/>
            <person name="Takami S."/>
            <person name="Terashima Y."/>
            <person name="Suzuki O."/>
            <person name="Nakagawa S."/>
            <person name="Senoh A."/>
            <person name="Mizoguchi H."/>
            <person name="Goto Y."/>
            <person name="Shimizu F."/>
            <person name="Wakebe H."/>
            <person name="Hishigaki H."/>
            <person name="Watanabe T."/>
            <person name="Sugiyama A."/>
            <person name="Takemoto M."/>
            <person name="Kawakami B."/>
            <person name="Yamazaki M."/>
            <person name="Watanabe K."/>
            <person name="Kumagai A."/>
            <person name="Itakura S."/>
            <person name="Fukuzumi Y."/>
            <person name="Fujimori Y."/>
            <person name="Komiyama M."/>
            <person name="Tashiro H."/>
            <person name="Tanigami A."/>
            <person name="Fujiwara T."/>
            <person name="Ono T."/>
            <person name="Yamada K."/>
            <person name="Fujii Y."/>
            <person name="Ozaki K."/>
            <person name="Hirao M."/>
            <person name="Ohmori Y."/>
            <person name="Kawabata A."/>
            <person name="Hikiji T."/>
            <person name="Kobatake N."/>
            <person name="Inagaki H."/>
            <person name="Ikema Y."/>
            <person name="Okamoto S."/>
            <person name="Okitani R."/>
            <person name="Kawakami T."/>
            <person name="Noguchi S."/>
            <person name="Itoh T."/>
            <person name="Shigeta K."/>
            <person name="Senba T."/>
            <person name="Matsumura K."/>
            <person name="Nakajima Y."/>
            <person name="Mizuno T."/>
            <person name="Morinaga M."/>
            <person name="Sasaki M."/>
            <person name="Togashi T."/>
            <person name="Oyama M."/>
            <person name="Hata H."/>
            <person name="Watanabe M."/>
            <person name="Komatsu T."/>
            <person name="Mizushima-Sugano J."/>
            <person name="Satoh T."/>
            <person name="Shirai Y."/>
            <person name="Takahashi Y."/>
            <person name="Nakagawa K."/>
            <person name="Okumura K."/>
            <person name="Nagase T."/>
            <person name="Nomura N."/>
            <person name="Kikuchi H."/>
            <person name="Masuho Y."/>
            <person name="Yamashita R."/>
            <person name="Nakai K."/>
            <person name="Yada T."/>
            <person name="Nakamura Y."/>
            <person name="Ohara O."/>
            <person name="Isogai T."/>
            <person name="Sugano S."/>
        </authorList>
    </citation>
    <scope>NUCLEOTIDE SEQUENCE [LARGE SCALE MRNA]</scope>
    <source>
        <tissue>Skeletal muscle</tissue>
    </source>
</reference>
<reference key="3">
    <citation type="journal article" date="2006" name="Nature">
        <title>Human chromosome 11 DNA sequence and analysis including novel gene identification.</title>
        <authorList>
            <person name="Taylor T.D."/>
            <person name="Noguchi H."/>
            <person name="Totoki Y."/>
            <person name="Toyoda A."/>
            <person name="Kuroki Y."/>
            <person name="Dewar K."/>
            <person name="Lloyd C."/>
            <person name="Itoh T."/>
            <person name="Takeda T."/>
            <person name="Kim D.-W."/>
            <person name="She X."/>
            <person name="Barlow K.F."/>
            <person name="Bloom T."/>
            <person name="Bruford E."/>
            <person name="Chang J.L."/>
            <person name="Cuomo C.A."/>
            <person name="Eichler E."/>
            <person name="FitzGerald M.G."/>
            <person name="Jaffe D.B."/>
            <person name="LaButti K."/>
            <person name="Nicol R."/>
            <person name="Park H.-S."/>
            <person name="Seaman C."/>
            <person name="Sougnez C."/>
            <person name="Yang X."/>
            <person name="Zimmer A.R."/>
            <person name="Zody M.C."/>
            <person name="Birren B.W."/>
            <person name="Nusbaum C."/>
            <person name="Fujiyama A."/>
            <person name="Hattori M."/>
            <person name="Rogers J."/>
            <person name="Lander E.S."/>
            <person name="Sakaki Y."/>
        </authorList>
    </citation>
    <scope>NUCLEOTIDE SEQUENCE [LARGE SCALE GENOMIC DNA]</scope>
</reference>
<reference key="4">
    <citation type="journal article" date="2004" name="Genome Res.">
        <title>The status, quality, and expansion of the NIH full-length cDNA project: the Mammalian Gene Collection (MGC).</title>
        <authorList>
            <consortium name="The MGC Project Team"/>
        </authorList>
    </citation>
    <scope>NUCLEOTIDE SEQUENCE [LARGE SCALE MRNA]</scope>
    <source>
        <tissue>Colon</tissue>
        <tissue>Kidney</tissue>
    </source>
</reference>
<reference key="5">
    <citation type="journal article" date="1985" name="J. Biochem.">
        <title>Isolation of human, swine, and rat prepepsinogens and calf preprochymosin, and determination of the primary structures of their NH2-terminal signal sequences.</title>
        <authorList>
            <person name="Ichihara Y."/>
            <person name="Sogawa K."/>
            <person name="Takahashi K."/>
        </authorList>
    </citation>
    <scope>PARTIAL PROTEIN SEQUENCE OF 1-28</scope>
</reference>
<reference key="6">
    <citation type="journal article" date="1989" name="J. Biochem.">
        <title>A comparative study on the NH2-terminal amino acid sequences and some other properties of six isozymic forms of human pepsinogens and pepsins.</title>
        <authorList>
            <person name="Athauda S.B.P."/>
            <person name="Tanji M."/>
            <person name="Kageyama T."/>
            <person name="Takahashi K."/>
        </authorList>
    </citation>
    <scope>PROTEIN SEQUENCE OF 16-100</scope>
</reference>
<reference key="7">
    <citation type="journal article" date="1988" name="FEBS Lett.">
        <title>Activation of human pepsinogens.</title>
        <authorList>
            <person name="Foltmann B."/>
        </authorList>
    </citation>
    <scope>PROTEIN SEQUENCE OF 16-68</scope>
</reference>
<reference key="8">
    <citation type="journal article" date="1970" name="J. Biol. Chem.">
        <title>Carboxyl-terminal sequence of human gastricsin and pepsin.</title>
        <authorList>
            <person name="Huang W.-Y."/>
            <person name="Tang J."/>
        </authorList>
    </citation>
    <scope>PROTEIN SEQUENCE OF 362-388</scope>
</reference>
<reference key="9">
    <citation type="journal article" date="1989" name="Genomics">
        <title>Nucleotide sequence comparison of five human pepsinogen A (PGA) genes: evolution of the PGA multigene family.</title>
        <authorList>
            <person name="Evers M.P.J."/>
            <person name="Zelle B."/>
            <person name="Bebelman J.-P."/>
            <person name="van Beusechem V."/>
            <person name="Kraakman L."/>
            <person name="Hoffer M.J.V."/>
            <person name="Pronk J.C."/>
            <person name="Mager W.H."/>
            <person name="Planta R.J."/>
            <person name="Eriksson A.W."/>
            <person name="Frants R.R."/>
        </authorList>
    </citation>
    <scope>IDENTIFICATION</scope>
    <source>
        <tissue>Placenta</tissue>
    </source>
</reference>
<reference key="10">
    <citation type="journal article" date="1995" name="Protein Sci.">
        <title>Crystal structure of human pepsin and its complex with pepstatin.</title>
        <authorList>
            <person name="Fujinaga M."/>
            <person name="Chernaia M.M."/>
            <person name="Tarasova N.I."/>
            <person name="Mosimann S.C."/>
            <person name="James M.N.G."/>
        </authorList>
    </citation>
    <scope>X-RAY CRYSTALLOGRAPHY (2.2 ANGSTROMS) OF 63-388</scope>
    <scope>ACTIVE SITES</scope>
    <scope>DISULFIDE BONDS</scope>
</reference>
<protein>
    <recommendedName>
        <fullName>Pepsin A-4</fullName>
        <ecNumber>3.4.23.1</ecNumber>
    </recommendedName>
    <alternativeName>
        <fullName>Pepsinogen-4</fullName>
    </alternativeName>
</protein>
<evidence type="ECO:0000250" key="1">
    <source>
        <dbReference type="UniProtKB" id="P03954"/>
    </source>
</evidence>
<evidence type="ECO:0000255" key="2">
    <source>
        <dbReference type="PROSITE-ProRule" id="PRU01103"/>
    </source>
</evidence>
<evidence type="ECO:0000255" key="3">
    <source>
        <dbReference type="PROSITE-ProRule" id="PRU10094"/>
    </source>
</evidence>
<evidence type="ECO:0000269" key="4">
    <source>
    </source>
</evidence>
<evidence type="ECO:0000269" key="5">
    <source>
    </source>
</evidence>
<evidence type="ECO:0000269" key="6">
    <source>
    </source>
</evidence>
<evidence type="ECO:0000305" key="7"/>
<evidence type="ECO:0007829" key="8">
    <source>
        <dbReference type="PDB" id="1QRP"/>
    </source>
</evidence>
<comment type="function">
    <text>Shows particularly broad specificity; although bonds involving phenylalanine and leucine are preferred, many others are also cleaved to some extent.</text>
</comment>
<comment type="catalytic activity">
    <reaction evidence="3">
        <text>Preferential cleavage: hydrophobic, preferably aromatic, residues in P1 and P1' positions. Cleaves 1-Phe-|-Val-2, 4-Gln-|-His-5, 13-Glu-|-Ala-14, 14-Ala-|-Leu-15, 15-Leu-|-Tyr-16, 16-Tyr-|-Leu-17, 23-Gly-|-Phe-24, 24-Phe-|-Phe-25 and 25-Phe-|-Tyr-26 bonds in the B chain of insulin.</text>
        <dbReference type="EC" id="3.4.23.1"/>
    </reaction>
</comment>
<comment type="interaction">
    <interactant intactId="EBI-12957629">
        <id>P0DJD7</id>
    </interactant>
    <interactant intactId="EBI-19125216">
        <id>Q86WK6</id>
        <label>AMIGO1</label>
    </interactant>
    <organismsDiffer>false</organismsDiffer>
    <experiments>3</experiments>
</comment>
<comment type="interaction">
    <interactant intactId="EBI-12957629">
        <id>P0DJD7</id>
    </interactant>
    <interactant intactId="EBI-12222807">
        <id>P04233-2</id>
        <label>CD74</label>
    </interactant>
    <organismsDiffer>false</organismsDiffer>
    <experiments>3</experiments>
</comment>
<comment type="interaction">
    <interactant intactId="EBI-12957629">
        <id>P0DJD7</id>
    </interactant>
    <interactant intactId="EBI-12887376">
        <id>Q96LL3</id>
        <label>FIMP</label>
    </interactant>
    <organismsDiffer>false</organismsDiffer>
    <experiments>3</experiments>
</comment>
<comment type="interaction">
    <interactant intactId="EBI-12957629">
        <id>P0DJD7</id>
    </interactant>
    <interactant intactId="EBI-12142257">
        <id>Q8TBE3</id>
        <label>FNDC9</label>
    </interactant>
    <organismsDiffer>false</organismsDiffer>
    <experiments>3</experiments>
</comment>
<comment type="interaction">
    <interactant intactId="EBI-12957629">
        <id>P0DJD7</id>
    </interactant>
    <interactant intactId="EBI-2867874">
        <id>Q9UM44</id>
        <label>HHLA2</label>
    </interactant>
    <organismsDiffer>false</organismsDiffer>
    <experiments>3</experiments>
</comment>
<comment type="interaction">
    <interactant intactId="EBI-12957629">
        <id>P0DJD7</id>
    </interactant>
    <interactant intactId="EBI-3919694">
        <id>P15151</id>
        <label>PVR</label>
    </interactant>
    <organismsDiffer>false</organismsDiffer>
    <experiments>3</experiments>
</comment>
<comment type="interaction">
    <interactant intactId="EBI-12957629">
        <id>P0DJD7</id>
    </interactant>
    <interactant intactId="EBI-10819434">
        <id>Q9NPE6</id>
        <label>SPAG4</label>
    </interactant>
    <organismsDiffer>false</organismsDiffer>
    <experiments>3</experiments>
</comment>
<comment type="interaction">
    <interactant intactId="EBI-12957629">
        <id>P0DJD7</id>
    </interactant>
    <interactant intactId="EBI-1211440">
        <id>P27105</id>
        <label>STOM</label>
    </interactant>
    <organismsDiffer>false</organismsDiffer>
    <experiments>3</experiments>
</comment>
<comment type="interaction">
    <interactant intactId="EBI-12957629">
        <id>P0DJD7</id>
    </interactant>
    <interactant intactId="EBI-2821497">
        <id>Q9BVX2</id>
        <label>TMEM106C</label>
    </interactant>
    <organismsDiffer>false</organismsDiffer>
    <experiments>3</experiments>
</comment>
<comment type="subcellular location">
    <subcellularLocation>
        <location>Secreted</location>
    </subcellularLocation>
</comment>
<comment type="similarity">
    <text evidence="7">Belongs to the peptidase A1 family.</text>
</comment>
<organism>
    <name type="scientific">Homo sapiens</name>
    <name type="common">Human</name>
    <dbReference type="NCBI Taxonomy" id="9606"/>
    <lineage>
        <taxon>Eukaryota</taxon>
        <taxon>Metazoa</taxon>
        <taxon>Chordata</taxon>
        <taxon>Craniata</taxon>
        <taxon>Vertebrata</taxon>
        <taxon>Euteleostomi</taxon>
        <taxon>Mammalia</taxon>
        <taxon>Eutheria</taxon>
        <taxon>Euarchontoglires</taxon>
        <taxon>Primates</taxon>
        <taxon>Haplorrhini</taxon>
        <taxon>Catarrhini</taxon>
        <taxon>Hominidae</taxon>
        <taxon>Homo</taxon>
    </lineage>
</organism>
<gene>
    <name type="primary">PGA4</name>
</gene>
<dbReference type="EC" id="3.4.23.1"/>
<dbReference type="EMBL" id="J00287">
    <property type="protein sequence ID" value="AAA98529.1"/>
    <property type="molecule type" value="Genomic_DNA"/>
</dbReference>
<dbReference type="EMBL" id="J00279">
    <property type="protein sequence ID" value="AAA98529.1"/>
    <property type="status" value="JOINED"/>
    <property type="molecule type" value="Genomic_DNA"/>
</dbReference>
<dbReference type="EMBL" id="J00280">
    <property type="protein sequence ID" value="AAA98529.1"/>
    <property type="status" value="JOINED"/>
    <property type="molecule type" value="Genomic_DNA"/>
</dbReference>
<dbReference type="EMBL" id="J00281">
    <property type="protein sequence ID" value="AAA98529.1"/>
    <property type="status" value="JOINED"/>
    <property type="molecule type" value="Genomic_DNA"/>
</dbReference>
<dbReference type="EMBL" id="J00282">
    <property type="protein sequence ID" value="AAA98529.1"/>
    <property type="status" value="JOINED"/>
    <property type="molecule type" value="Genomic_DNA"/>
</dbReference>
<dbReference type="EMBL" id="J00283">
    <property type="protein sequence ID" value="AAA98529.1"/>
    <property type="status" value="JOINED"/>
    <property type="molecule type" value="Genomic_DNA"/>
</dbReference>
<dbReference type="EMBL" id="J00284">
    <property type="protein sequence ID" value="AAA98529.1"/>
    <property type="status" value="JOINED"/>
    <property type="molecule type" value="Genomic_DNA"/>
</dbReference>
<dbReference type="EMBL" id="J00285">
    <property type="protein sequence ID" value="AAA98529.1"/>
    <property type="status" value="JOINED"/>
    <property type="molecule type" value="Genomic_DNA"/>
</dbReference>
<dbReference type="EMBL" id="J00286">
    <property type="protein sequence ID" value="AAA98529.1"/>
    <property type="status" value="JOINED"/>
    <property type="molecule type" value="Genomic_DNA"/>
</dbReference>
<dbReference type="EMBL" id="AK291864">
    <property type="protein sequence ID" value="BAF84553.1"/>
    <property type="molecule type" value="mRNA"/>
</dbReference>
<dbReference type="EMBL" id="AP000437">
    <property type="status" value="NOT_ANNOTATED_CDS"/>
    <property type="molecule type" value="Genomic_DNA"/>
</dbReference>
<dbReference type="EMBL" id="AP003037">
    <property type="status" value="NOT_ANNOTATED_CDS"/>
    <property type="molecule type" value="Genomic_DNA"/>
</dbReference>
<dbReference type="EMBL" id="BC150659">
    <property type="protein sequence ID" value="AAI50660.1"/>
    <property type="molecule type" value="mRNA"/>
</dbReference>
<dbReference type="EMBL" id="BC171910">
    <property type="protein sequence ID" value="AAI71910.1"/>
    <property type="molecule type" value="mRNA"/>
</dbReference>
<dbReference type="EMBL" id="BC171920">
    <property type="protein sequence ID" value="AAI71920.1"/>
    <property type="molecule type" value="mRNA"/>
</dbReference>
<dbReference type="CCDS" id="CCDS31575.1"/>
<dbReference type="PIR" id="A00980">
    <property type="entry name" value="PEHU"/>
</dbReference>
<dbReference type="PIR" id="A30142">
    <property type="entry name" value="A30142"/>
</dbReference>
<dbReference type="PIR" id="A92058">
    <property type="entry name" value="A92058"/>
</dbReference>
<dbReference type="PIR" id="B30142">
    <property type="entry name" value="B30142"/>
</dbReference>
<dbReference type="RefSeq" id="NP_001073276.1">
    <property type="nucleotide sequence ID" value="NM_001079808.6"/>
</dbReference>
<dbReference type="RefSeq" id="XP_016854970.1">
    <property type="nucleotide sequence ID" value="XM_016999481.1"/>
</dbReference>
<dbReference type="PDB" id="1FLH">
    <property type="method" value="X-ray"/>
    <property type="resolution" value="2.45 A"/>
    <property type="chains" value="A=63-388"/>
</dbReference>
<dbReference type="PDB" id="1PSN">
    <property type="method" value="X-ray"/>
    <property type="resolution" value="2.20 A"/>
    <property type="chains" value="A=63-388"/>
</dbReference>
<dbReference type="PDB" id="1PSO">
    <property type="method" value="X-ray"/>
    <property type="resolution" value="2.00 A"/>
    <property type="chains" value="E=63-388"/>
</dbReference>
<dbReference type="PDB" id="1QRP">
    <property type="method" value="X-ray"/>
    <property type="resolution" value="1.96 A"/>
    <property type="chains" value="E=63-388"/>
</dbReference>
<dbReference type="PDB" id="3UTL">
    <property type="method" value="X-ray"/>
    <property type="resolution" value="2.61 A"/>
    <property type="chains" value="A=63-388"/>
</dbReference>
<dbReference type="PDBsum" id="1FLH"/>
<dbReference type="PDBsum" id="1PSN"/>
<dbReference type="PDBsum" id="1PSO"/>
<dbReference type="PDBsum" id="1QRP"/>
<dbReference type="PDBsum" id="3UTL"/>
<dbReference type="SMR" id="P0DJD7"/>
<dbReference type="BioGRID" id="569099">
    <property type="interactions" value="11"/>
</dbReference>
<dbReference type="FunCoup" id="P0DJD7">
    <property type="interactions" value="103"/>
</dbReference>
<dbReference type="IntAct" id="P0DJD7">
    <property type="interactions" value="10"/>
</dbReference>
<dbReference type="STRING" id="9606.ENSP00000367391"/>
<dbReference type="BindingDB" id="P0DJD7"/>
<dbReference type="MEROPS" id="A01.001"/>
<dbReference type="MEROPS" id="A01.070"/>
<dbReference type="GlyGen" id="P0DJD7">
    <property type="glycosylation" value="1 site"/>
</dbReference>
<dbReference type="iPTMnet" id="P0DJD7"/>
<dbReference type="PhosphoSitePlus" id="P0DJD7"/>
<dbReference type="BioMuta" id="PGA4"/>
<dbReference type="DMDM" id="378521995"/>
<dbReference type="MassIVE" id="P0DJD7"/>
<dbReference type="PaxDb" id="9606-ENSP00000367391"/>
<dbReference type="PeptideAtlas" id="P0DJD7"/>
<dbReference type="Antibodypedia" id="28082">
    <property type="antibodies" value="145 antibodies from 21 providers"/>
</dbReference>
<dbReference type="DNASU" id="643847"/>
<dbReference type="Ensembl" id="ENST00000378149.9">
    <property type="protein sequence ID" value="ENSP00000367391.3"/>
    <property type="gene ID" value="ENSG00000229183.10"/>
</dbReference>
<dbReference type="GeneID" id="643847"/>
<dbReference type="KEGG" id="hsa:643847"/>
<dbReference type="MANE-Select" id="ENST00000378149.9">
    <property type="protein sequence ID" value="ENSP00000367391.3"/>
    <property type="RefSeq nucleotide sequence ID" value="NM_001079808.6"/>
    <property type="RefSeq protein sequence ID" value="NP_001073276.1"/>
</dbReference>
<dbReference type="UCSC" id="uc001nqy.4">
    <property type="organism name" value="human"/>
</dbReference>
<dbReference type="AGR" id="HGNC:8886"/>
<dbReference type="CTD" id="643847"/>
<dbReference type="DisGeNET" id="643847"/>
<dbReference type="GeneCards" id="PGA4"/>
<dbReference type="HGNC" id="HGNC:8886">
    <property type="gene designation" value="PGA4"/>
</dbReference>
<dbReference type="HPA" id="ENSG00000229183">
    <property type="expression patterns" value="Tissue enriched (stomach)"/>
</dbReference>
<dbReference type="MIM" id="169700">
    <property type="type" value="gene"/>
</dbReference>
<dbReference type="MIM" id="169720">
    <property type="type" value="gene"/>
</dbReference>
<dbReference type="neXtProt" id="NX_P0DJD7"/>
<dbReference type="OpenTargets" id="ENSG00000229183"/>
<dbReference type="VEuPathDB" id="HostDB:ENSG00000229183"/>
<dbReference type="eggNOG" id="KOG1339">
    <property type="taxonomic scope" value="Eukaryota"/>
</dbReference>
<dbReference type="GeneTree" id="ENSGT00940000155036"/>
<dbReference type="HOGENOM" id="CLU_013253_3_0_1"/>
<dbReference type="InParanoid" id="P0DJD7"/>
<dbReference type="OMA" id="MGFWTID"/>
<dbReference type="OrthoDB" id="9528103at2759"/>
<dbReference type="PAN-GO" id="P0DJD7">
    <property type="GO annotations" value="2 GO annotations based on evolutionary models"/>
</dbReference>
<dbReference type="PhylomeDB" id="P0DJD7"/>
<dbReference type="TreeFam" id="TF314990"/>
<dbReference type="PathwayCommons" id="P0DJD7"/>
<dbReference type="Reactome" id="R-HSA-5683826">
    <property type="pathway name" value="Surfactant metabolism"/>
</dbReference>
<dbReference type="SignaLink" id="P0DJD7"/>
<dbReference type="BioGRID-ORCS" id="643847">
    <property type="hits" value="5 hits in 241 CRISPR screens"/>
</dbReference>
<dbReference type="ChiTaRS" id="PGA4">
    <property type="organism name" value="human"/>
</dbReference>
<dbReference type="EvolutionaryTrace" id="P0DJD7"/>
<dbReference type="GenomeRNAi" id="643847"/>
<dbReference type="Pharos" id="P0DJD7">
    <property type="development level" value="Tbio"/>
</dbReference>
<dbReference type="PRO" id="PR:P0DJD7"/>
<dbReference type="Proteomes" id="UP000005640">
    <property type="component" value="Chromosome 11"/>
</dbReference>
<dbReference type="RNAct" id="P0DJD7">
    <property type="molecule type" value="protein"/>
</dbReference>
<dbReference type="Bgee" id="ENSG00000229183">
    <property type="expression patterns" value="Expressed in right uterine tube and 93 other cell types or tissues"/>
</dbReference>
<dbReference type="ExpressionAtlas" id="P0DJD7">
    <property type="expression patterns" value="baseline and differential"/>
</dbReference>
<dbReference type="GO" id="GO:0070062">
    <property type="term" value="C:extracellular exosome"/>
    <property type="evidence" value="ECO:0007005"/>
    <property type="project" value="UniProtKB"/>
</dbReference>
<dbReference type="GO" id="GO:0097486">
    <property type="term" value="C:multivesicular body lumen"/>
    <property type="evidence" value="ECO:0000304"/>
    <property type="project" value="Reactome"/>
</dbReference>
<dbReference type="GO" id="GO:0004190">
    <property type="term" value="F:aspartic-type endopeptidase activity"/>
    <property type="evidence" value="ECO:0000318"/>
    <property type="project" value="GO_Central"/>
</dbReference>
<dbReference type="GO" id="GO:0007586">
    <property type="term" value="P:digestion"/>
    <property type="evidence" value="ECO:0007669"/>
    <property type="project" value="UniProtKB-KW"/>
</dbReference>
<dbReference type="GO" id="GO:0006508">
    <property type="term" value="P:proteolysis"/>
    <property type="evidence" value="ECO:0000318"/>
    <property type="project" value="GO_Central"/>
</dbReference>
<dbReference type="CDD" id="cd05478">
    <property type="entry name" value="pepsin_A"/>
    <property type="match status" value="1"/>
</dbReference>
<dbReference type="FunFam" id="2.40.70.10:FF:000006">
    <property type="entry name" value="Cathepsin E"/>
    <property type="match status" value="1"/>
</dbReference>
<dbReference type="FunFam" id="2.40.70.10:FF:000004">
    <property type="entry name" value="Pepsin A"/>
    <property type="match status" value="1"/>
</dbReference>
<dbReference type="Gene3D" id="6.10.140.60">
    <property type="match status" value="1"/>
</dbReference>
<dbReference type="Gene3D" id="2.40.70.10">
    <property type="entry name" value="Acid Proteases"/>
    <property type="match status" value="2"/>
</dbReference>
<dbReference type="InterPro" id="IPR001461">
    <property type="entry name" value="Aspartic_peptidase_A1"/>
</dbReference>
<dbReference type="InterPro" id="IPR001969">
    <property type="entry name" value="Aspartic_peptidase_AS"/>
</dbReference>
<dbReference type="InterPro" id="IPR012848">
    <property type="entry name" value="Aspartic_peptidase_N"/>
</dbReference>
<dbReference type="InterPro" id="IPR034162">
    <property type="entry name" value="Pepsin_A"/>
</dbReference>
<dbReference type="InterPro" id="IPR033121">
    <property type="entry name" value="PEPTIDASE_A1"/>
</dbReference>
<dbReference type="InterPro" id="IPR021109">
    <property type="entry name" value="Peptidase_aspartic_dom_sf"/>
</dbReference>
<dbReference type="PANTHER" id="PTHR47966">
    <property type="entry name" value="BETA-SITE APP-CLEAVING ENZYME, ISOFORM A-RELATED"/>
    <property type="match status" value="1"/>
</dbReference>
<dbReference type="PANTHER" id="PTHR47966:SF22">
    <property type="entry name" value="PEPSIN A-3-RELATED"/>
    <property type="match status" value="1"/>
</dbReference>
<dbReference type="Pfam" id="PF07966">
    <property type="entry name" value="A1_Propeptide"/>
    <property type="match status" value="1"/>
</dbReference>
<dbReference type="Pfam" id="PF00026">
    <property type="entry name" value="Asp"/>
    <property type="match status" value="1"/>
</dbReference>
<dbReference type="PRINTS" id="PR00792">
    <property type="entry name" value="PEPSIN"/>
</dbReference>
<dbReference type="SUPFAM" id="SSF50630">
    <property type="entry name" value="Acid proteases"/>
    <property type="match status" value="1"/>
</dbReference>
<dbReference type="PROSITE" id="PS00141">
    <property type="entry name" value="ASP_PROTEASE"/>
    <property type="match status" value="2"/>
</dbReference>
<dbReference type="PROSITE" id="PS51767">
    <property type="entry name" value="PEPTIDASE_A1"/>
    <property type="match status" value="1"/>
</dbReference>
<accession>P0DJD7</accession>
<accession>A8K749</accession>
<accession>B7ZW75</accession>
<accession>P00790</accession>
<accession>Q7M4R0</accession>
<accession>Q8N1E3</accession>
<feature type="signal peptide" evidence="4 5">
    <location>
        <begin position="1"/>
        <end position="15"/>
    </location>
</feature>
<feature type="propeptide" id="PRO_0000415757" description="Activation peptide">
    <location>
        <begin position="16"/>
        <end position="62"/>
    </location>
</feature>
<feature type="chain" id="PRO_0000415758" description="Pepsin A-4">
    <location>
        <begin position="63"/>
        <end position="388"/>
    </location>
</feature>
<feature type="domain" description="Peptidase A1" evidence="2">
    <location>
        <begin position="76"/>
        <end position="385"/>
    </location>
</feature>
<feature type="active site" evidence="3 6">
    <location>
        <position position="94"/>
    </location>
</feature>
<feature type="active site" evidence="3 6">
    <location>
        <position position="277"/>
    </location>
</feature>
<feature type="modified residue" description="Phosphoserine" evidence="1">
    <location>
        <position position="130"/>
    </location>
</feature>
<feature type="disulfide bond" evidence="6">
    <location>
        <begin position="107"/>
        <end position="112"/>
    </location>
</feature>
<feature type="disulfide bond" evidence="6">
    <location>
        <begin position="268"/>
        <end position="272"/>
    </location>
</feature>
<feature type="disulfide bond" evidence="6">
    <location>
        <begin position="311"/>
        <end position="344"/>
    </location>
</feature>
<feature type="sequence conflict" description="In Ref. 2; BAF84553." evidence="7" ref="2">
    <original>A</original>
    <variation>T</variation>
    <location>
        <position position="291"/>
    </location>
</feature>
<feature type="sequence conflict" description="In Ref. 8; AA sequence." evidence="7" ref="8">
    <original>YF</original>
    <variation>FY</variation>
    <location>
        <begin position="371"/>
        <end position="372"/>
    </location>
</feature>
<feature type="strand" evidence="8">
    <location>
        <begin position="65"/>
        <end position="67"/>
    </location>
</feature>
<feature type="strand" evidence="8">
    <location>
        <begin position="69"/>
        <end position="71"/>
    </location>
</feature>
<feature type="turn" evidence="8">
    <location>
        <begin position="72"/>
        <end position="74"/>
    </location>
</feature>
<feature type="strand" evidence="8">
    <location>
        <begin position="75"/>
        <end position="82"/>
    </location>
</feature>
<feature type="turn" evidence="8">
    <location>
        <begin position="83"/>
        <end position="86"/>
    </location>
</feature>
<feature type="strand" evidence="8">
    <location>
        <begin position="87"/>
        <end position="94"/>
    </location>
</feature>
<feature type="strand" evidence="8">
    <location>
        <begin position="100"/>
        <end position="102"/>
    </location>
</feature>
<feature type="helix" evidence="8">
    <location>
        <begin position="110"/>
        <end position="113"/>
    </location>
</feature>
<feature type="helix" evidence="8">
    <location>
        <begin position="120"/>
        <end position="122"/>
    </location>
</feature>
<feature type="strand" evidence="8">
    <location>
        <begin position="127"/>
        <end position="136"/>
    </location>
</feature>
<feature type="strand" evidence="8">
    <location>
        <begin position="141"/>
        <end position="153"/>
    </location>
</feature>
<feature type="strand" evidence="8">
    <location>
        <begin position="156"/>
        <end position="168"/>
    </location>
</feature>
<feature type="helix" evidence="8">
    <location>
        <begin position="172"/>
        <end position="176"/>
    </location>
</feature>
<feature type="strand" evidence="8">
    <location>
        <begin position="180"/>
        <end position="184"/>
    </location>
</feature>
<feature type="helix" evidence="8">
    <location>
        <begin position="188"/>
        <end position="190"/>
    </location>
</feature>
<feature type="helix" evidence="8">
    <location>
        <begin position="192"/>
        <end position="194"/>
    </location>
</feature>
<feature type="helix" evidence="8">
    <location>
        <begin position="198"/>
        <end position="204"/>
    </location>
</feature>
<feature type="strand" evidence="8">
    <location>
        <begin position="209"/>
        <end position="216"/>
    </location>
</feature>
<feature type="strand" evidence="8">
    <location>
        <begin position="226"/>
        <end position="229"/>
    </location>
</feature>
<feature type="helix" evidence="8">
    <location>
        <begin position="234"/>
        <end position="236"/>
    </location>
</feature>
<feature type="strand" evidence="8">
    <location>
        <begin position="237"/>
        <end position="239"/>
    </location>
</feature>
<feature type="strand" evidence="8">
    <location>
        <begin position="242"/>
        <end position="245"/>
    </location>
</feature>
<feature type="turn" evidence="8">
    <location>
        <begin position="249"/>
        <end position="252"/>
    </location>
</feature>
<feature type="strand" evidence="8">
    <location>
        <begin position="253"/>
        <end position="256"/>
    </location>
</feature>
<feature type="strand" evidence="8">
    <location>
        <begin position="258"/>
        <end position="261"/>
    </location>
</feature>
<feature type="strand" evidence="8">
    <location>
        <begin position="264"/>
        <end position="267"/>
    </location>
</feature>
<feature type="strand" evidence="8">
    <location>
        <begin position="272"/>
        <end position="276"/>
    </location>
</feature>
<feature type="strand" evidence="8">
    <location>
        <begin position="282"/>
        <end position="285"/>
    </location>
</feature>
<feature type="helix" evidence="8">
    <location>
        <begin position="287"/>
        <end position="296"/>
    </location>
</feature>
<feature type="strand" evidence="8">
    <location>
        <begin position="307"/>
        <end position="309"/>
    </location>
</feature>
<feature type="helix" evidence="8">
    <location>
        <begin position="311"/>
        <end position="316"/>
    </location>
</feature>
<feature type="strand" evidence="8">
    <location>
        <begin position="320"/>
        <end position="324"/>
    </location>
</feature>
<feature type="strand" evidence="8">
    <location>
        <begin position="327"/>
        <end position="331"/>
    </location>
</feature>
<feature type="helix" evidence="8">
    <location>
        <begin position="333"/>
        <end position="336"/>
    </location>
</feature>
<feature type="strand" evidence="8">
    <location>
        <begin position="337"/>
        <end position="340"/>
    </location>
</feature>
<feature type="strand" evidence="8">
    <location>
        <begin position="343"/>
        <end position="350"/>
    </location>
</feature>
<feature type="strand" evidence="8">
    <location>
        <begin position="361"/>
        <end position="363"/>
    </location>
</feature>
<feature type="helix" evidence="8">
    <location>
        <begin position="365"/>
        <end position="370"/>
    </location>
</feature>
<feature type="strand" evidence="8">
    <location>
        <begin position="371"/>
        <end position="376"/>
    </location>
</feature>
<feature type="turn" evidence="8">
    <location>
        <begin position="377"/>
        <end position="380"/>
    </location>
</feature>
<feature type="strand" evidence="8">
    <location>
        <begin position="381"/>
        <end position="387"/>
    </location>
</feature>